<proteinExistence type="inferred from homology"/>
<accession>B8DPG1</accession>
<keyword id="KW-0030">Aminoacyl-tRNA synthetase</keyword>
<keyword id="KW-0067">ATP-binding</keyword>
<keyword id="KW-0963">Cytoplasm</keyword>
<keyword id="KW-0436">Ligase</keyword>
<keyword id="KW-0547">Nucleotide-binding</keyword>
<keyword id="KW-0648">Protein biosynthesis</keyword>
<evidence type="ECO:0000255" key="1">
    <source>
        <dbReference type="HAMAP-Rule" id="MF_00255"/>
    </source>
</evidence>
<comment type="catalytic activity">
    <reaction evidence="1">
        <text>tRNA(Gly) + glycine + ATP = glycyl-tRNA(Gly) + AMP + diphosphate</text>
        <dbReference type="Rhea" id="RHEA:16013"/>
        <dbReference type="Rhea" id="RHEA-COMP:9664"/>
        <dbReference type="Rhea" id="RHEA-COMP:9683"/>
        <dbReference type="ChEBI" id="CHEBI:30616"/>
        <dbReference type="ChEBI" id="CHEBI:33019"/>
        <dbReference type="ChEBI" id="CHEBI:57305"/>
        <dbReference type="ChEBI" id="CHEBI:78442"/>
        <dbReference type="ChEBI" id="CHEBI:78522"/>
        <dbReference type="ChEBI" id="CHEBI:456215"/>
        <dbReference type="EC" id="6.1.1.14"/>
    </reaction>
</comment>
<comment type="subunit">
    <text evidence="1">Tetramer of two alpha and two beta subunits.</text>
</comment>
<comment type="subcellular location">
    <subcellularLocation>
        <location evidence="1">Cytoplasm</location>
    </subcellularLocation>
</comment>
<comment type="similarity">
    <text evidence="1">Belongs to the class-II aminoacyl-tRNA synthetase family.</text>
</comment>
<name>SYGB_NITV9</name>
<feature type="chain" id="PRO_1000197181" description="Glycine--tRNA ligase beta subunit">
    <location>
        <begin position="1"/>
        <end position="701"/>
    </location>
</feature>
<sequence>MSQFVLEIGFEELPSRFLPGLERELAERFARALDDDGVEHESIRVLTTPRRAAVLIEGINPVQREAEEVVPGPPVRVAFDAEGKPTKAAEGFARTQGVDMADIFTLSTDKGEYIAVRKRTGGANAADLIATACPTVVAALPFPKRMRWGSGDFTFGRPLRWLLALFDDAVVPFEVGGVVSGGVTWGHRIHGAGPLVVKSADDYLNVVIEKGGVTPDPAERRAMILAGGNAAAEAAGGRILWKESLLDEVQGLAEHPVPLLGDIDPSFLELPREVLLTSMESHQKSFGVEGPDGALLPHFLTVLNLTPLDVALVKKGWERVLRARLEDGRFFWKTDLAASFDAWLAELDNVIFLGPLGSMGDKTRRLEKLCAWLAKAAGVADESACARAGRLSKADLVSEMVGEFDTLQGIMGGIYARRMGEPETVAAALAEQYLPAGPDSPVPATLAGALLSIADKADTMAGCFGLGMIPTGAADPYALRRCALGIARIVLEHGLRIDVRELFRTALALYGERAWKLAPAEALVKLEEFFMARLKNHFMAAGHETLLVEAALAADTPEGAGIDVRAAGARLAALSDFSRRDDFGSAVLTFKRAANIIRKQGQEGGAVLDGAYSHALLAEDAEKALAARLEEVAPRFDALWAADDFASLFGLLGELRPAVDAFFDGVMVMCDDAAVRTNRLNLLKALTLRLGRLADFGALQM</sequence>
<organism>
    <name type="scientific">Nitratidesulfovibrio vulgaris (strain DSM 19637 / Miyazaki F)</name>
    <name type="common">Desulfovibrio vulgaris</name>
    <dbReference type="NCBI Taxonomy" id="883"/>
    <lineage>
        <taxon>Bacteria</taxon>
        <taxon>Pseudomonadati</taxon>
        <taxon>Thermodesulfobacteriota</taxon>
        <taxon>Desulfovibrionia</taxon>
        <taxon>Desulfovibrionales</taxon>
        <taxon>Desulfovibrionaceae</taxon>
        <taxon>Nitratidesulfovibrio</taxon>
    </lineage>
</organism>
<protein>
    <recommendedName>
        <fullName evidence="1">Glycine--tRNA ligase beta subunit</fullName>
        <ecNumber evidence="1">6.1.1.14</ecNumber>
    </recommendedName>
    <alternativeName>
        <fullName evidence="1">Glycyl-tRNA synthetase beta subunit</fullName>
        <shortName evidence="1">GlyRS</shortName>
    </alternativeName>
</protein>
<gene>
    <name evidence="1" type="primary">glyS</name>
    <name type="ordered locus">DvMF_0291</name>
</gene>
<dbReference type="EC" id="6.1.1.14" evidence="1"/>
<dbReference type="EMBL" id="CP001197">
    <property type="protein sequence ID" value="ACL07248.1"/>
    <property type="molecule type" value="Genomic_DNA"/>
</dbReference>
<dbReference type="SMR" id="B8DPG1"/>
<dbReference type="STRING" id="883.DvMF_0291"/>
<dbReference type="KEGG" id="dvm:DvMF_0291"/>
<dbReference type="eggNOG" id="COG0751">
    <property type="taxonomic scope" value="Bacteria"/>
</dbReference>
<dbReference type="HOGENOM" id="CLU_007220_2_2_7"/>
<dbReference type="OrthoDB" id="9775440at2"/>
<dbReference type="GO" id="GO:0005829">
    <property type="term" value="C:cytosol"/>
    <property type="evidence" value="ECO:0007669"/>
    <property type="project" value="TreeGrafter"/>
</dbReference>
<dbReference type="GO" id="GO:0004814">
    <property type="term" value="F:arginine-tRNA ligase activity"/>
    <property type="evidence" value="ECO:0007669"/>
    <property type="project" value="InterPro"/>
</dbReference>
<dbReference type="GO" id="GO:0005524">
    <property type="term" value="F:ATP binding"/>
    <property type="evidence" value="ECO:0007669"/>
    <property type="project" value="UniProtKB-UniRule"/>
</dbReference>
<dbReference type="GO" id="GO:0004820">
    <property type="term" value="F:glycine-tRNA ligase activity"/>
    <property type="evidence" value="ECO:0007669"/>
    <property type="project" value="UniProtKB-UniRule"/>
</dbReference>
<dbReference type="GO" id="GO:0006420">
    <property type="term" value="P:arginyl-tRNA aminoacylation"/>
    <property type="evidence" value="ECO:0007669"/>
    <property type="project" value="InterPro"/>
</dbReference>
<dbReference type="GO" id="GO:0006426">
    <property type="term" value="P:glycyl-tRNA aminoacylation"/>
    <property type="evidence" value="ECO:0007669"/>
    <property type="project" value="UniProtKB-UniRule"/>
</dbReference>
<dbReference type="HAMAP" id="MF_00255">
    <property type="entry name" value="Gly_tRNA_synth_beta"/>
    <property type="match status" value="1"/>
</dbReference>
<dbReference type="InterPro" id="IPR008909">
    <property type="entry name" value="DALR_anticod-bd"/>
</dbReference>
<dbReference type="InterPro" id="IPR015944">
    <property type="entry name" value="Gly-tRNA-synth_bsu"/>
</dbReference>
<dbReference type="InterPro" id="IPR006194">
    <property type="entry name" value="Gly-tRNA-synth_heterodimer"/>
</dbReference>
<dbReference type="NCBIfam" id="TIGR00211">
    <property type="entry name" value="glyS"/>
    <property type="match status" value="1"/>
</dbReference>
<dbReference type="PANTHER" id="PTHR30075:SF2">
    <property type="entry name" value="GLYCINE--TRNA LIGASE, CHLOROPLASTIC_MITOCHONDRIAL 2"/>
    <property type="match status" value="1"/>
</dbReference>
<dbReference type="PANTHER" id="PTHR30075">
    <property type="entry name" value="GLYCYL-TRNA SYNTHETASE"/>
    <property type="match status" value="1"/>
</dbReference>
<dbReference type="Pfam" id="PF05746">
    <property type="entry name" value="DALR_1"/>
    <property type="match status" value="1"/>
</dbReference>
<dbReference type="Pfam" id="PF02092">
    <property type="entry name" value="tRNA_synt_2f"/>
    <property type="match status" value="1"/>
</dbReference>
<dbReference type="PRINTS" id="PR01045">
    <property type="entry name" value="TRNASYNTHGB"/>
</dbReference>
<dbReference type="SUPFAM" id="SSF109604">
    <property type="entry name" value="HD-domain/PDEase-like"/>
    <property type="match status" value="1"/>
</dbReference>
<dbReference type="PROSITE" id="PS50861">
    <property type="entry name" value="AA_TRNA_LIGASE_II_GLYAB"/>
    <property type="match status" value="1"/>
</dbReference>
<reference key="1">
    <citation type="submission" date="2008-10" db="EMBL/GenBank/DDBJ databases">
        <title>Complete sequence of Desulfovibrio vulgaris str. 'Miyazaki F'.</title>
        <authorList>
            <person name="Lucas S."/>
            <person name="Copeland A."/>
            <person name="Lapidus A."/>
            <person name="Glavina del Rio T."/>
            <person name="Dalin E."/>
            <person name="Tice H."/>
            <person name="Bruce D."/>
            <person name="Goodwin L."/>
            <person name="Pitluck S."/>
            <person name="Sims D."/>
            <person name="Brettin T."/>
            <person name="Detter J.C."/>
            <person name="Han C."/>
            <person name="Larimer F."/>
            <person name="Land M."/>
            <person name="Hauser L."/>
            <person name="Kyrpides N."/>
            <person name="Mikhailova N."/>
            <person name="Hazen T.C."/>
            <person name="Richardson P."/>
        </authorList>
    </citation>
    <scope>NUCLEOTIDE SEQUENCE [LARGE SCALE GENOMIC DNA]</scope>
    <source>
        <strain>DSM 19637 / Miyazaki F</strain>
    </source>
</reference>